<dbReference type="EC" id="2.4.2.9" evidence="1"/>
<dbReference type="EMBL" id="CP000969">
    <property type="protein sequence ID" value="ACB08566.1"/>
    <property type="molecule type" value="Genomic_DNA"/>
</dbReference>
<dbReference type="RefSeq" id="WP_011942891.1">
    <property type="nucleotide sequence ID" value="NC_010483.1"/>
</dbReference>
<dbReference type="SMR" id="B1L7Y5"/>
<dbReference type="KEGG" id="trq:TRQ2_0206"/>
<dbReference type="HOGENOM" id="CLU_067096_2_2_0"/>
<dbReference type="UniPathway" id="UPA00574">
    <property type="reaction ID" value="UER00636"/>
</dbReference>
<dbReference type="Proteomes" id="UP000001687">
    <property type="component" value="Chromosome"/>
</dbReference>
<dbReference type="GO" id="GO:0005525">
    <property type="term" value="F:GTP binding"/>
    <property type="evidence" value="ECO:0007669"/>
    <property type="project" value="UniProtKB-KW"/>
</dbReference>
<dbReference type="GO" id="GO:0000287">
    <property type="term" value="F:magnesium ion binding"/>
    <property type="evidence" value="ECO:0007669"/>
    <property type="project" value="UniProtKB-UniRule"/>
</dbReference>
<dbReference type="GO" id="GO:0004845">
    <property type="term" value="F:uracil phosphoribosyltransferase activity"/>
    <property type="evidence" value="ECO:0007669"/>
    <property type="project" value="UniProtKB-UniRule"/>
</dbReference>
<dbReference type="GO" id="GO:0044206">
    <property type="term" value="P:UMP salvage"/>
    <property type="evidence" value="ECO:0007669"/>
    <property type="project" value="UniProtKB-UniRule"/>
</dbReference>
<dbReference type="GO" id="GO:0006223">
    <property type="term" value="P:uracil salvage"/>
    <property type="evidence" value="ECO:0007669"/>
    <property type="project" value="InterPro"/>
</dbReference>
<dbReference type="CDD" id="cd06223">
    <property type="entry name" value="PRTases_typeI"/>
    <property type="match status" value="1"/>
</dbReference>
<dbReference type="FunFam" id="3.40.50.2020:FF:000003">
    <property type="entry name" value="Uracil phosphoribosyltransferase"/>
    <property type="match status" value="1"/>
</dbReference>
<dbReference type="Gene3D" id="3.40.50.2020">
    <property type="match status" value="1"/>
</dbReference>
<dbReference type="HAMAP" id="MF_01218_B">
    <property type="entry name" value="Upp_B"/>
    <property type="match status" value="1"/>
</dbReference>
<dbReference type="InterPro" id="IPR000836">
    <property type="entry name" value="PRibTrfase_dom"/>
</dbReference>
<dbReference type="InterPro" id="IPR029057">
    <property type="entry name" value="PRTase-like"/>
</dbReference>
<dbReference type="InterPro" id="IPR034332">
    <property type="entry name" value="Upp_B"/>
</dbReference>
<dbReference type="InterPro" id="IPR050054">
    <property type="entry name" value="UPRTase/APRTase"/>
</dbReference>
<dbReference type="InterPro" id="IPR005765">
    <property type="entry name" value="Ura_phspho_trans"/>
</dbReference>
<dbReference type="NCBIfam" id="NF001097">
    <property type="entry name" value="PRK00129.1"/>
    <property type="match status" value="1"/>
</dbReference>
<dbReference type="NCBIfam" id="TIGR01091">
    <property type="entry name" value="upp"/>
    <property type="match status" value="1"/>
</dbReference>
<dbReference type="PANTHER" id="PTHR32315">
    <property type="entry name" value="ADENINE PHOSPHORIBOSYLTRANSFERASE"/>
    <property type="match status" value="1"/>
</dbReference>
<dbReference type="PANTHER" id="PTHR32315:SF4">
    <property type="entry name" value="URACIL PHOSPHORIBOSYLTRANSFERASE, CHLOROPLASTIC"/>
    <property type="match status" value="1"/>
</dbReference>
<dbReference type="Pfam" id="PF14681">
    <property type="entry name" value="UPRTase"/>
    <property type="match status" value="1"/>
</dbReference>
<dbReference type="SUPFAM" id="SSF53271">
    <property type="entry name" value="PRTase-like"/>
    <property type="match status" value="1"/>
</dbReference>
<feature type="chain" id="PRO_1000139174" description="Uracil phosphoribosyltransferase">
    <location>
        <begin position="1"/>
        <end position="209"/>
    </location>
</feature>
<feature type="binding site" evidence="1">
    <location>
        <position position="79"/>
    </location>
    <ligand>
        <name>5-phospho-alpha-D-ribose 1-diphosphate</name>
        <dbReference type="ChEBI" id="CHEBI:58017"/>
    </ligand>
</feature>
<feature type="binding site" evidence="1">
    <location>
        <position position="104"/>
    </location>
    <ligand>
        <name>5-phospho-alpha-D-ribose 1-diphosphate</name>
        <dbReference type="ChEBI" id="CHEBI:58017"/>
    </ligand>
</feature>
<feature type="binding site" evidence="1">
    <location>
        <begin position="131"/>
        <end position="139"/>
    </location>
    <ligand>
        <name>5-phospho-alpha-D-ribose 1-diphosphate</name>
        <dbReference type="ChEBI" id="CHEBI:58017"/>
    </ligand>
</feature>
<feature type="binding site" evidence="1">
    <location>
        <position position="194"/>
    </location>
    <ligand>
        <name>uracil</name>
        <dbReference type="ChEBI" id="CHEBI:17568"/>
    </ligand>
</feature>
<feature type="binding site" evidence="1">
    <location>
        <begin position="199"/>
        <end position="201"/>
    </location>
    <ligand>
        <name>uracil</name>
        <dbReference type="ChEBI" id="CHEBI:17568"/>
    </ligand>
</feature>
<feature type="binding site" evidence="1">
    <location>
        <position position="200"/>
    </location>
    <ligand>
        <name>5-phospho-alpha-D-ribose 1-diphosphate</name>
        <dbReference type="ChEBI" id="CHEBI:58017"/>
    </ligand>
</feature>
<name>UPP_THESQ</name>
<protein>
    <recommendedName>
        <fullName evidence="1">Uracil phosphoribosyltransferase</fullName>
        <ecNumber evidence="1">2.4.2.9</ecNumber>
    </recommendedName>
    <alternativeName>
        <fullName evidence="1">UMP pyrophosphorylase</fullName>
    </alternativeName>
    <alternativeName>
        <fullName evidence="1">UPRTase</fullName>
    </alternativeName>
</protein>
<comment type="function">
    <text evidence="1">Catalyzes the conversion of uracil and 5-phospho-alpha-D-ribose 1-diphosphate (PRPP) to UMP and diphosphate.</text>
</comment>
<comment type="catalytic activity">
    <reaction evidence="1">
        <text>UMP + diphosphate = 5-phospho-alpha-D-ribose 1-diphosphate + uracil</text>
        <dbReference type="Rhea" id="RHEA:13017"/>
        <dbReference type="ChEBI" id="CHEBI:17568"/>
        <dbReference type="ChEBI" id="CHEBI:33019"/>
        <dbReference type="ChEBI" id="CHEBI:57865"/>
        <dbReference type="ChEBI" id="CHEBI:58017"/>
        <dbReference type="EC" id="2.4.2.9"/>
    </reaction>
</comment>
<comment type="cofactor">
    <cofactor evidence="1">
        <name>Mg(2+)</name>
        <dbReference type="ChEBI" id="CHEBI:18420"/>
    </cofactor>
    <text evidence="1">Binds 1 Mg(2+) ion per subunit. The magnesium is bound as Mg-PRPP.</text>
</comment>
<comment type="activity regulation">
    <text evidence="1">Allosterically activated by GTP.</text>
</comment>
<comment type="pathway">
    <text evidence="1">Pyrimidine metabolism; UMP biosynthesis via salvage pathway; UMP from uracil: step 1/1.</text>
</comment>
<comment type="similarity">
    <text evidence="1">Belongs to the UPRTase family.</text>
</comment>
<gene>
    <name evidence="1" type="primary">upp</name>
    <name type="ordered locus">TRQ2_0206</name>
</gene>
<accession>B1L7Y5</accession>
<reference key="1">
    <citation type="journal article" date="2011" name="J. Bacteriol.">
        <title>Genome sequence of Thermotoga sp. strain RQ2, a hyperthermophilic bacterium isolated from a geothermally heated region of the seafloor near Ribeira Quente, the Azores.</title>
        <authorList>
            <person name="Swithers K.S."/>
            <person name="DiPippo J.L."/>
            <person name="Bruce D.C."/>
            <person name="Detter C."/>
            <person name="Tapia R."/>
            <person name="Han S."/>
            <person name="Saunders E."/>
            <person name="Goodwin L.A."/>
            <person name="Han J."/>
            <person name="Woyke T."/>
            <person name="Pitluck S."/>
            <person name="Pennacchio L."/>
            <person name="Nolan M."/>
            <person name="Mikhailova N."/>
            <person name="Lykidis A."/>
            <person name="Land M.L."/>
            <person name="Brettin T."/>
            <person name="Stetter K.O."/>
            <person name="Nelson K.E."/>
            <person name="Gogarten J.P."/>
            <person name="Noll K.M."/>
        </authorList>
    </citation>
    <scope>NUCLEOTIDE SEQUENCE [LARGE SCALE GENOMIC DNA]</scope>
    <source>
        <strain>RQ2</strain>
    </source>
</reference>
<keyword id="KW-0021">Allosteric enzyme</keyword>
<keyword id="KW-0328">Glycosyltransferase</keyword>
<keyword id="KW-0342">GTP-binding</keyword>
<keyword id="KW-0460">Magnesium</keyword>
<keyword id="KW-0547">Nucleotide-binding</keyword>
<keyword id="KW-0808">Transferase</keyword>
<proteinExistence type="inferred from homology"/>
<organism>
    <name type="scientific">Thermotoga sp. (strain RQ2)</name>
    <dbReference type="NCBI Taxonomy" id="126740"/>
    <lineage>
        <taxon>Bacteria</taxon>
        <taxon>Thermotogati</taxon>
        <taxon>Thermotogota</taxon>
        <taxon>Thermotogae</taxon>
        <taxon>Thermotogales</taxon>
        <taxon>Thermotogaceae</taxon>
        <taxon>Thermotoga</taxon>
    </lineage>
</organism>
<evidence type="ECO:0000255" key="1">
    <source>
        <dbReference type="HAMAP-Rule" id="MF_01218"/>
    </source>
</evidence>
<sequence length="209" mass="23319">MKNLVVVDHPLIKHKLTIMRDKNTGPKEFRELLREITLLLAYEATRHLKCEEVEVETPITKTIGYRINDKDVVVVPILRAGLVMADGILELLPNASVGHIGIYRDPETLQAVEYYAKLPPLNDDKEVFLLDPMLATGVSSVKAIEILKENGAKKITLVALIAAPEGVEAVERKYKDVKIYVAALDERLNDHGYIIPGLGDAGDRLFRTK</sequence>